<organism>
    <name type="scientific">Rattus norvegicus</name>
    <name type="common">Rat</name>
    <dbReference type="NCBI Taxonomy" id="10116"/>
    <lineage>
        <taxon>Eukaryota</taxon>
        <taxon>Metazoa</taxon>
        <taxon>Chordata</taxon>
        <taxon>Craniata</taxon>
        <taxon>Vertebrata</taxon>
        <taxon>Euteleostomi</taxon>
        <taxon>Mammalia</taxon>
        <taxon>Eutheria</taxon>
        <taxon>Euarchontoglires</taxon>
        <taxon>Glires</taxon>
        <taxon>Rodentia</taxon>
        <taxon>Myomorpha</taxon>
        <taxon>Muroidea</taxon>
        <taxon>Muridae</taxon>
        <taxon>Murinae</taxon>
        <taxon>Rattus</taxon>
    </lineage>
</organism>
<protein>
    <recommendedName>
        <fullName evidence="13">Sodium-coupled neutral amino acid transporter 5</fullName>
    </recommendedName>
    <alternativeName>
        <fullName>Solute carrier family 38 member 5</fullName>
    </alternativeName>
    <alternativeName>
        <fullName>System N transporter 2</fullName>
    </alternativeName>
</protein>
<comment type="function">
    <text evidence="4 5 7 8 9">Symporter that cotransports neutral amino acids and sodium ions, coupled to an H(+) antiporter activity (PubMed:11698233, PubMed:15218073, PubMed:16249471, PubMed:16629640, PubMed:22821889). Releases L-glutamine and glycine from astroglial cells and may participate in the glutamate/GABA-glutamine cycle and the NMDA receptors activation (PubMed:22821889). In addition contributes significantly to L-glutamine uptake in retina, namely in ganglion and Mueller cells and, therefore participates in the retinal glutamate-glutamine cycle (PubMed:16249471). The transport activity is pH sensitive (PubMed:22821889, PubMed:15218073, PubMed:11698233), Li(+) tolerant (PubMed:22821889, PubMed:15218073, PubMed:11698233), bidirectional (PubMed:22821889, PubMed:15218073) and associated with large uncoupled fluxes of protons (PubMed:11698233, PubMed:15218073, PubMed:22821889). The transport is electroneutral coupled to the cotransport of 1 Na(+) and the antiport of 1 H(+) (PubMed:22821889). May have particular importance for modulation of net hepatic glutamine flux (PubMed:15218073).</text>
</comment>
<comment type="catalytic activity">
    <reaction evidence="4 5 8 9">
        <text>L-serine(out) + Na(+)(out) + H(+)(in) = L-serine(in) + Na(+)(in) + H(+)(out)</text>
        <dbReference type="Rhea" id="RHEA:71159"/>
        <dbReference type="ChEBI" id="CHEBI:15378"/>
        <dbReference type="ChEBI" id="CHEBI:29101"/>
        <dbReference type="ChEBI" id="CHEBI:33384"/>
    </reaction>
    <physiologicalReaction direction="left-to-right" evidence="4 14 16">
        <dbReference type="Rhea" id="RHEA:71160"/>
    </physiologicalReaction>
    <physiologicalReaction direction="right-to-left" evidence="14">
        <dbReference type="Rhea" id="RHEA:71161"/>
    </physiologicalReaction>
</comment>
<comment type="catalytic activity">
    <reaction evidence="4 9">
        <text>L-alanine(out) + Na(+)(out) + H(+)(in) = L-alanine(in) + Na(+)(in) + H(+)(out)</text>
        <dbReference type="Rhea" id="RHEA:71163"/>
        <dbReference type="ChEBI" id="CHEBI:15378"/>
        <dbReference type="ChEBI" id="CHEBI:29101"/>
        <dbReference type="ChEBI" id="CHEBI:57972"/>
    </reaction>
    <physiologicalReaction direction="left-to-right" evidence="4">
        <dbReference type="Rhea" id="RHEA:71164"/>
    </physiologicalReaction>
    <physiologicalReaction direction="right-to-left" evidence="14">
        <dbReference type="Rhea" id="RHEA:71165"/>
    </physiologicalReaction>
</comment>
<comment type="catalytic activity">
    <reaction evidence="4 9">
        <text>glycine(out) + Na(+)(out) + H(+)(in) = glycine(in) + Na(+)(in) + H(+)(out)</text>
        <dbReference type="Rhea" id="RHEA:71167"/>
        <dbReference type="ChEBI" id="CHEBI:15378"/>
        <dbReference type="ChEBI" id="CHEBI:29101"/>
        <dbReference type="ChEBI" id="CHEBI:57305"/>
    </reaction>
    <physiologicalReaction direction="left-to-right" evidence="4 9">
        <dbReference type="Rhea" id="RHEA:71168"/>
    </physiologicalReaction>
    <physiologicalReaction direction="right-to-left" evidence="9 14">
        <dbReference type="Rhea" id="RHEA:71169"/>
    </physiologicalReaction>
</comment>
<comment type="catalytic activity">
    <reaction evidence="4 5 7 9">
        <text>L-glutamine(out) + Na(+)(out) + H(+)(in) = L-glutamine(in) + Na(+)(in) + H(+)(out)</text>
        <dbReference type="Rhea" id="RHEA:71127"/>
        <dbReference type="ChEBI" id="CHEBI:15378"/>
        <dbReference type="ChEBI" id="CHEBI:29101"/>
        <dbReference type="ChEBI" id="CHEBI:58359"/>
    </reaction>
    <physiologicalReaction direction="left-to-right" evidence="4 5 9">
        <dbReference type="Rhea" id="RHEA:71128"/>
    </physiologicalReaction>
    <physiologicalReaction direction="right-to-left" evidence="5 9">
        <dbReference type="Rhea" id="RHEA:71129"/>
    </physiologicalReaction>
</comment>
<comment type="catalytic activity">
    <reaction evidence="4 9">
        <text>L-asparagine(out) + Na(+)(out) + H(+)(in) = L-asparagine(in) + Na(+)(in) + H(+)(out)</text>
        <dbReference type="Rhea" id="RHEA:71131"/>
        <dbReference type="ChEBI" id="CHEBI:15378"/>
        <dbReference type="ChEBI" id="CHEBI:29101"/>
        <dbReference type="ChEBI" id="CHEBI:58048"/>
    </reaction>
    <physiologicalReaction direction="left-to-right" evidence="4">
        <dbReference type="Rhea" id="RHEA:71132"/>
    </physiologicalReaction>
    <physiologicalReaction direction="right-to-left" evidence="14">
        <dbReference type="Rhea" id="RHEA:71133"/>
    </physiologicalReaction>
</comment>
<comment type="catalytic activity">
    <reaction evidence="4 5">
        <text>L-histidine(out) + Na(+)(out) + H(+)(in) = L-histidine(in) + Na(+)(in) + H(+)(out)</text>
        <dbReference type="Rhea" id="RHEA:71135"/>
        <dbReference type="ChEBI" id="CHEBI:15378"/>
        <dbReference type="ChEBI" id="CHEBI:29101"/>
        <dbReference type="ChEBI" id="CHEBI:57595"/>
    </reaction>
    <physiologicalReaction direction="left-to-right" evidence="4 14">
        <dbReference type="Rhea" id="RHEA:71136"/>
    </physiologicalReaction>
    <physiologicalReaction direction="right-to-left" evidence="14">
        <dbReference type="Rhea" id="RHEA:71137"/>
    </physiologicalReaction>
</comment>
<comment type="catalytic activity">
    <reaction evidence="9">
        <text>L-cysteine(out) + Na(+)(out) + H(+)(in) = L-cysteine(in) + Na(+)(in) + H(+)(out)</text>
        <dbReference type="Rhea" id="RHEA:71171"/>
        <dbReference type="ChEBI" id="CHEBI:15378"/>
        <dbReference type="ChEBI" id="CHEBI:29101"/>
        <dbReference type="ChEBI" id="CHEBI:35235"/>
    </reaction>
    <physiologicalReaction direction="left-to-right" evidence="9">
        <dbReference type="Rhea" id="RHEA:71172"/>
    </physiologicalReaction>
    <physiologicalReaction direction="right-to-left" evidence="17">
        <dbReference type="Rhea" id="RHEA:71173"/>
    </physiologicalReaction>
</comment>
<comment type="activity regulation">
    <text evidence="1 8">Not inhibited by lithium (By similarity). Partial allosteric regulation on ions sodium binding (PubMed:16629640).</text>
</comment>
<comment type="biophysicochemical properties">
    <kinetics>
        <KM evidence="8">0.92 mM for L-serine (at pH 8.0)</KM>
        <KM evidence="5">0.99 mM for L-glutamine influx (at pH 8.0)</KM>
        <KM evidence="5">0.73 mM for L-serine (at pH 8.0)</KM>
        <KM evidence="5">0.21 mM for L-histidine (at pH 8.0)</KM>
        <KM evidence="5">1.2 mM for L-glutamine efflux (at pH 8.0)</KM>
        <KM evidence="9">7.1 mM for glycine</KM>
        <KM evidence="9">1.2 mM for L-glutamine</KM>
        <KM evidence="9">76.7 mM for sodium ion</KM>
        <Vmax evidence="9">192.0 nmol/min/mg enzyme toward glycine (at (-) 80 mV)</Vmax>
        <Vmax evidence="9">87.0 nmol/min/mg enzyme toward L-glutamine (at (-) 80 mV)</Vmax>
    </kinetics>
    <phDependence>
        <text evidence="5 7">Optimum pH is 8.0.</text>
    </phDependence>
</comment>
<comment type="subcellular location">
    <subcellularLocation>
        <location evidence="6 9">Cell membrane</location>
        <topology evidence="2">Multi-pass membrane protein</topology>
    </subcellularLocation>
    <text evidence="9">Localized at astroglial membrane.</text>
</comment>
<comment type="alternative products">
    <event type="alternative splicing"/>
    <isoform>
        <id>A2VCW5-1</id>
        <name>1</name>
        <sequence type="displayed"/>
    </isoform>
    <isoform>
        <id>A2VCW5-2</id>
        <name>2</name>
        <sequence type="described" ref="VSP_029704"/>
    </isoform>
</comment>
<comment type="tissue specificity">
    <text evidence="4 5 6 9 10">Highly expressed in neocortex, hippocampus, striatum and spinal cord by astrocytes (at protein level) (PubMed:15390093). Expressed in brain, lung, stomach, kidney, spleen and testis (PubMed:11698233). Expressed in the cerebral cortex between the second and third postnatal week, where expressed exclusively in glial cells from postnatal day 14 to adulthood (at protein level) (PubMed:24333324). Expressed in the cerebellum at post natal day 12 (P12) (PubMed:24333324). Expressed in liver (PubMed:11698233, PubMed:15218073). Expressed inside the cell body of the astrocytes (PubMed:22821889).</text>
</comment>
<comment type="similarity">
    <text evidence="13">Belongs to the amino acid/polyamine transporter 2 family.</text>
</comment>
<comment type="caution">
    <text evidence="4 9">Nakanishi et al (PubMed:11698233) shows that the transport process is electrogenic, contrary to the conclusions of Hamdani et al (PubMed:22821889) who finds that the transport is electroneutral with a Na(+):L-glutamine stoichiometry of 1:1 (PubMed:11698233, PubMed:22821889). Hamdani et al. shows that this electrogenic transport describes by Nakanishi et al. would correspond to large uncoupled fluxes of protons (PubMed:11698233, PubMed:22821889).</text>
</comment>
<name>S38A5_RAT</name>
<sequence>MAISCAVGMEMQEPKMNGTLSTGAAAGYRQEREGFLPTTHGPAPGRKPVQFLDFEGKTSFGMSVFNLSNAIMGSGILGLAYAMAHTGVIFFLALLLCIALLSSYSIHLLLTCASVVGIRAYEQLGQRAFGPAGKVVVAIIICLHNVGAMSSYLFIIKSELPLVIGTFLHMDPEGDWFLKGNLLIILVSLLIILPLALMKHLGYLGYTSSLSLTCMLFFLISVIYKKFQLGCVVSHNDTVVESEPAPLQAFNSSCEAKLFTVDSQMSYTVPIMAFAFVCHPEVLPIYTELCCPTQRRMQAVANMSIGAMFIMYGLTATFGYLTFYSTVKAEMLEMYTQEDLLILCVRLAVLLAVTLTVPVVLFPIRRALQQLLFPSKAFSWPRHVAIALILLILVNILVICVPTIRDIFGFIGSTSAPSLIFILPSVFYLRIVPADMEPLFSWPKIQALCFGVLGVLFMAISLGFMFANWATGQSRMSGH</sequence>
<reference key="1">
    <citation type="journal article" date="2001" name="Am. J. Physiol.">
        <title>Cloning and functional characterization of a new subtype of the amino acid transport system N.</title>
        <authorList>
            <person name="Nakanishi T."/>
            <person name="Kekuda R."/>
            <person name="Fei Y.J."/>
            <person name="Hatanaka T."/>
            <person name="Sugawara M."/>
            <person name="Martindale R.G."/>
            <person name="Leibach F.H."/>
            <person name="Prasad P.D."/>
            <person name="Ganapathy V."/>
        </authorList>
    </citation>
    <scope>NUCLEOTIDE SEQUENCE [MRNA] (ISOFORM 2)</scope>
    <scope>FUNCTION</scope>
    <scope>TRANSPORTER ACTIVITY</scope>
    <scope>TISSUE SPECIFICITY</scope>
    <source>
        <tissue>Brain</tissue>
    </source>
</reference>
<reference key="2">
    <citation type="journal article" date="2004" name="Genome Res.">
        <title>The status, quality, and expansion of the NIH full-length cDNA project: the Mammalian Gene Collection (MGC).</title>
        <authorList>
            <consortium name="The MGC Project Team"/>
        </authorList>
    </citation>
    <scope>NUCLEOTIDE SEQUENCE [LARGE SCALE MRNA] (ISOFORM 1)</scope>
    <source>
        <tissue>Brain</tissue>
    </source>
</reference>
<reference key="3">
    <citation type="journal article" date="2004" name="J. Physiol. (Lond.)">
        <title>Bidirectional substrate fluxes through the system N (SNAT5) glutamine transporter may determine net glutamine flux in rat liver.</title>
        <authorList>
            <person name="Baird F.E."/>
            <person name="Beattie K.J."/>
            <person name="Hyde A.R."/>
            <person name="Ganapathy V."/>
            <person name="Rennie M.J."/>
            <person name="Taylor P.M."/>
        </authorList>
    </citation>
    <scope>FUNCTION</scope>
    <scope>TRANSPORTER ACTIVITY</scope>
    <scope>BIOPHYSICOCHEMICAL PROPERTIES</scope>
    <scope>TISSUE SPECIFICITY</scope>
</reference>
<reference key="4">
    <citation type="journal article" date="2005" name="Glia">
        <title>Amino acid transporter SNAT5 localizes to glial cells in the rat brain.</title>
        <authorList>
            <person name="Cubelos B."/>
            <person name="Gonzalez-Gonzalez I.M."/>
            <person name="Gimenez C."/>
            <person name="Zafra F."/>
        </authorList>
    </citation>
    <scope>TOPOLOGY</scope>
    <scope>SUBCELLULAR LOCATION</scope>
    <scope>TISSUE SPECIFICITY</scope>
</reference>
<reference key="5">
    <citation type="journal article" date="2005" name="Invest. Ophthalmol. Vis. Sci.">
        <title>Expression and function of glutamine transporters SN1 (SNAT3) and SN2 (SNAT5) in retinal Mueller cells.</title>
        <authorList>
            <person name="Umapathy N.S."/>
            <person name="Li W."/>
            <person name="Mysona B.A."/>
            <person name="Smith S.B."/>
            <person name="Ganapathy V."/>
        </authorList>
    </citation>
    <scope>FUNCTION</scope>
    <scope>TRANSPORTER ACTIVITY</scope>
    <scope>TISSUE SPECIFICITY</scope>
    <scope>BIOPHYSICOCHEMICAL PROPERTIES</scope>
</reference>
<reference key="6">
    <citation type="journal article" date="2006" name="Biochem. J.">
        <title>Evidence for allosteric regulation of pH-sensitive System A (SNAT2) and System N (SNAT5) amino acid transporter activity involving a conserved histidine residue.</title>
        <authorList>
            <person name="Baird F.E."/>
            <person name="Pinilla-Tenas J.J."/>
            <person name="Ogilvie W.L.J."/>
            <person name="Ganapathy V."/>
            <person name="Hundal H.S."/>
            <person name="Taylor P.M."/>
        </authorList>
    </citation>
    <scope>FUNCTION</scope>
    <scope>TRANSPORTER ACTIVITY</scope>
    <scope>MUTAGENESIS OF HIS-479</scope>
    <scope>BIOPHYSICOCHEMICAL PROPERTIES</scope>
    <scope>ACTIVITY REGULATION</scope>
</reference>
<reference key="7">
    <citation type="journal article" date="2012" name="Glia">
        <title>The system N transporter SN2 doubles as a transmitter precursor furnisher and a potential regulator of NMDA receptors.</title>
        <authorList>
            <person name="Hamdani E.H."/>
            <person name="Gudbrandsen M."/>
            <person name="Bjoerkmo M."/>
            <person name="Chaudhry F.A."/>
        </authorList>
    </citation>
    <scope>FUNCTION</scope>
    <scope>TRANSPORTER ACTIVITY</scope>
    <scope>BIOPHYSICOCHEMICAL PROPERTIES</scope>
    <scope>SUBCELLULAR LOCATION</scope>
    <scope>TISSUE SPECIFICITY</scope>
</reference>
<reference key="8">
    <citation type="journal article" date="2014" name="Neurochem. Int.">
        <title>Expression of the System N transporter (SNAT5/SN2) during development indicates its plausible role in glutamatergic neurotransmission.</title>
        <authorList>
            <person name="Rodriguez A."/>
            <person name="Ortega A."/>
            <person name="Berumen L.C."/>
            <person name="Garcia-Alcocer M.G."/>
            <person name="Gimenez C."/>
            <person name="Zafra F."/>
        </authorList>
    </citation>
    <scope>TISSUE SPECIFICITY</scope>
</reference>
<evidence type="ECO:0000250" key="1">
    <source>
        <dbReference type="UniProtKB" id="Q8WUX1"/>
    </source>
</evidence>
<evidence type="ECO:0000255" key="2"/>
<evidence type="ECO:0000255" key="3">
    <source>
        <dbReference type="PROSITE-ProRule" id="PRU00114"/>
    </source>
</evidence>
<evidence type="ECO:0000269" key="4">
    <source>
    </source>
</evidence>
<evidence type="ECO:0000269" key="5">
    <source>
    </source>
</evidence>
<evidence type="ECO:0000269" key="6">
    <source>
    </source>
</evidence>
<evidence type="ECO:0000269" key="7">
    <source>
    </source>
</evidence>
<evidence type="ECO:0000269" key="8">
    <source>
    </source>
</evidence>
<evidence type="ECO:0000269" key="9">
    <source>
    </source>
</evidence>
<evidence type="ECO:0000269" key="10">
    <source>
    </source>
</evidence>
<evidence type="ECO:0000303" key="11">
    <source>
    </source>
</evidence>
<evidence type="ECO:0000303" key="12">
    <source>
    </source>
</evidence>
<evidence type="ECO:0000305" key="13"/>
<evidence type="ECO:0000305" key="14">
    <source>
    </source>
</evidence>
<evidence type="ECO:0000305" key="15">
    <source>
    </source>
</evidence>
<evidence type="ECO:0000305" key="16">
    <source>
    </source>
</evidence>
<evidence type="ECO:0000305" key="17">
    <source>
    </source>
</evidence>
<evidence type="ECO:0000312" key="18">
    <source>
        <dbReference type="RGD" id="620702"/>
    </source>
</evidence>
<accession>A2VCW5</accession>
<accession>Q91XR7</accession>
<keyword id="KW-0025">Alternative splicing</keyword>
<keyword id="KW-1003">Cell membrane</keyword>
<keyword id="KW-1015">Disulfide bond</keyword>
<keyword id="KW-0325">Glycoprotein</keyword>
<keyword id="KW-0472">Membrane</keyword>
<keyword id="KW-1185">Reference proteome</keyword>
<keyword id="KW-0812">Transmembrane</keyword>
<keyword id="KW-1133">Transmembrane helix</keyword>
<dbReference type="EMBL" id="AF276870">
    <property type="protein sequence ID" value="AAK69075.1"/>
    <property type="molecule type" value="mRNA"/>
</dbReference>
<dbReference type="EMBL" id="BC128725">
    <property type="protein sequence ID" value="AAI28726.1"/>
    <property type="molecule type" value="mRNA"/>
</dbReference>
<dbReference type="RefSeq" id="NP_001418625.1">
    <molecule id="A2VCW5-1"/>
    <property type="nucleotide sequence ID" value="NM_001431696.1"/>
</dbReference>
<dbReference type="RefSeq" id="NP_620209.2">
    <molecule id="A2VCW5-2"/>
    <property type="nucleotide sequence ID" value="NM_138854.2"/>
</dbReference>
<dbReference type="SMR" id="A2VCW5"/>
<dbReference type="FunCoup" id="A2VCW5">
    <property type="interactions" value="20"/>
</dbReference>
<dbReference type="STRING" id="10116.ENSRNOP00000038781"/>
<dbReference type="TCDB" id="2.A.18.6.8">
    <property type="family name" value="the amino acid/auxin permease (aaap) family"/>
</dbReference>
<dbReference type="GlyCosmos" id="A2VCW5">
    <property type="glycosylation" value="1 site, No reported glycans"/>
</dbReference>
<dbReference type="GlyGen" id="A2VCW5">
    <property type="glycosylation" value="1 site"/>
</dbReference>
<dbReference type="iPTMnet" id="A2VCW5"/>
<dbReference type="PhosphoSitePlus" id="A2VCW5"/>
<dbReference type="PaxDb" id="10116-ENSRNOP00000038781"/>
<dbReference type="PeptideAtlas" id="A2VCW5"/>
<dbReference type="Ensembl" id="ENSRNOT00000038068.6">
    <molecule id="A2VCW5-1"/>
    <property type="protein sequence ID" value="ENSRNOP00000038781.5"/>
    <property type="gene ID" value="ENSRNOG00000027767.6"/>
</dbReference>
<dbReference type="Ensembl" id="ENSRNOT00000079664.2">
    <molecule id="A2VCW5-2"/>
    <property type="protein sequence ID" value="ENSRNOP00000073818.1"/>
    <property type="gene ID" value="ENSRNOG00000027767.6"/>
</dbReference>
<dbReference type="GeneID" id="192208"/>
<dbReference type="KEGG" id="rno:192208"/>
<dbReference type="UCSC" id="RGD:620702">
    <molecule id="A2VCW5-1"/>
    <property type="organism name" value="rat"/>
</dbReference>
<dbReference type="AGR" id="RGD:620702"/>
<dbReference type="CTD" id="92745"/>
<dbReference type="RGD" id="620702">
    <property type="gene designation" value="Slc38a5"/>
</dbReference>
<dbReference type="eggNOG" id="KOG1305">
    <property type="taxonomic scope" value="Eukaryota"/>
</dbReference>
<dbReference type="GeneTree" id="ENSGT00940000161233"/>
<dbReference type="InParanoid" id="A2VCW5"/>
<dbReference type="OMA" id="FGCARFG"/>
<dbReference type="OrthoDB" id="655540at2759"/>
<dbReference type="PhylomeDB" id="A2VCW5"/>
<dbReference type="TreeFam" id="TF328787"/>
<dbReference type="Reactome" id="R-RNO-352230">
    <property type="pathway name" value="Amino acid transport across the plasma membrane"/>
</dbReference>
<dbReference type="SABIO-RK" id="A2VCW5"/>
<dbReference type="PRO" id="PR:A2VCW5"/>
<dbReference type="Proteomes" id="UP000002494">
    <property type="component" value="Chromosome X"/>
</dbReference>
<dbReference type="Bgee" id="ENSRNOG00000027767">
    <property type="expression patterns" value="Expressed in pancreas and 15 other cell types or tissues"/>
</dbReference>
<dbReference type="ExpressionAtlas" id="A2VCW5">
    <property type="expression patterns" value="baseline and differential"/>
</dbReference>
<dbReference type="GO" id="GO:0005886">
    <property type="term" value="C:plasma membrane"/>
    <property type="evidence" value="ECO:0000314"/>
    <property type="project" value="UniProtKB"/>
</dbReference>
<dbReference type="GO" id="GO:0022853">
    <property type="term" value="F:active monoatomic ion transmembrane transporter activity"/>
    <property type="evidence" value="ECO:0007669"/>
    <property type="project" value="UniProtKB-ARBA"/>
</dbReference>
<dbReference type="GO" id="GO:0022858">
    <property type="term" value="F:alanine transmembrane transporter activity"/>
    <property type="evidence" value="ECO:0000266"/>
    <property type="project" value="RGD"/>
</dbReference>
<dbReference type="GO" id="GO:0015171">
    <property type="term" value="F:amino acid transmembrane transporter activity"/>
    <property type="evidence" value="ECO:0000314"/>
    <property type="project" value="RGD"/>
</dbReference>
<dbReference type="GO" id="GO:0015187">
    <property type="term" value="F:glycine transmembrane transporter activity"/>
    <property type="evidence" value="ECO:0000314"/>
    <property type="project" value="RGD"/>
</dbReference>
<dbReference type="GO" id="GO:0015182">
    <property type="term" value="F:L-asparagine transmembrane transporter activity"/>
    <property type="evidence" value="ECO:0000266"/>
    <property type="project" value="RGD"/>
</dbReference>
<dbReference type="GO" id="GO:0015186">
    <property type="term" value="F:L-glutamine transmembrane transporter activity"/>
    <property type="evidence" value="ECO:0000314"/>
    <property type="project" value="ARUK-UCL"/>
</dbReference>
<dbReference type="GO" id="GO:0140830">
    <property type="term" value="F:L-glutamine, sodium:proton antiporter activity"/>
    <property type="evidence" value="ECO:0000314"/>
    <property type="project" value="UniProtKB"/>
</dbReference>
<dbReference type="GO" id="GO:0005290">
    <property type="term" value="F:L-histidine transmembrane transporter activity"/>
    <property type="evidence" value="ECO:0000314"/>
    <property type="project" value="ARUK-UCL"/>
</dbReference>
<dbReference type="GO" id="GO:0015194">
    <property type="term" value="F:L-serine transmembrane transporter activity"/>
    <property type="evidence" value="ECO:0000314"/>
    <property type="project" value="ARUK-UCL"/>
</dbReference>
<dbReference type="GO" id="GO:0140893">
    <property type="term" value="F:neutral amino acid, sodium:proton antiporter activity"/>
    <property type="evidence" value="ECO:0000314"/>
    <property type="project" value="UniProtKB"/>
</dbReference>
<dbReference type="GO" id="GO:0015175">
    <property type="term" value="F:neutral L-amino acid transmembrane transporter activity"/>
    <property type="evidence" value="ECO:0000314"/>
    <property type="project" value="RGD"/>
</dbReference>
<dbReference type="GO" id="GO:0032973">
    <property type="term" value="P:amino acid export across plasma membrane"/>
    <property type="evidence" value="ECO:0000314"/>
    <property type="project" value="UniProtKB"/>
</dbReference>
<dbReference type="GO" id="GO:0089718">
    <property type="term" value="P:amino acid import across plasma membrane"/>
    <property type="evidence" value="ECO:0000314"/>
    <property type="project" value="UniProtKB"/>
</dbReference>
<dbReference type="GO" id="GO:1903713">
    <property type="term" value="P:asparagine transmembrane transport"/>
    <property type="evidence" value="ECO:0000266"/>
    <property type="project" value="RGD"/>
</dbReference>
<dbReference type="GO" id="GO:0006868">
    <property type="term" value="P:glutamine transport"/>
    <property type="evidence" value="ECO:0000314"/>
    <property type="project" value="ARUK-UCL"/>
</dbReference>
<dbReference type="GO" id="GO:0015816">
    <property type="term" value="P:glycine transport"/>
    <property type="evidence" value="ECO:0000314"/>
    <property type="project" value="RGD"/>
</dbReference>
<dbReference type="GO" id="GO:1904557">
    <property type="term" value="P:L-alanine transmembrane transport"/>
    <property type="evidence" value="ECO:0000266"/>
    <property type="project" value="RGD"/>
</dbReference>
<dbReference type="GO" id="GO:1903803">
    <property type="term" value="P:L-glutamine import across plasma membrane"/>
    <property type="evidence" value="ECO:0000314"/>
    <property type="project" value="UniProtKB"/>
</dbReference>
<dbReference type="GO" id="GO:0089709">
    <property type="term" value="P:L-histidine transmembrane transport"/>
    <property type="evidence" value="ECO:0000314"/>
    <property type="project" value="ARUK-UCL"/>
</dbReference>
<dbReference type="GO" id="GO:1903812">
    <property type="term" value="P:L-serine import across plasma membrane"/>
    <property type="evidence" value="ECO:0000314"/>
    <property type="project" value="UniProtKB"/>
</dbReference>
<dbReference type="GO" id="GO:0015825">
    <property type="term" value="P:L-serine transport"/>
    <property type="evidence" value="ECO:0000314"/>
    <property type="project" value="ARUK-UCL"/>
</dbReference>
<dbReference type="GO" id="GO:0015804">
    <property type="term" value="P:neutral amino acid transport"/>
    <property type="evidence" value="ECO:0000314"/>
    <property type="project" value="UniProtKB"/>
</dbReference>
<dbReference type="GO" id="GO:0032329">
    <property type="term" value="P:serine transport"/>
    <property type="evidence" value="ECO:0000266"/>
    <property type="project" value="RGD"/>
</dbReference>
<dbReference type="InterPro" id="IPR013057">
    <property type="entry name" value="AA_transpt_TM"/>
</dbReference>
<dbReference type="PANTHER" id="PTHR22950">
    <property type="entry name" value="AMINO ACID TRANSPORTER"/>
    <property type="match status" value="1"/>
</dbReference>
<dbReference type="PANTHER" id="PTHR22950:SF74">
    <property type="entry name" value="SODIUM-COUPLED NEUTRAL AMINO ACID TRANSPORTER 5"/>
    <property type="match status" value="1"/>
</dbReference>
<dbReference type="Pfam" id="PF01490">
    <property type="entry name" value="Aa_trans"/>
    <property type="match status" value="1"/>
</dbReference>
<feature type="chain" id="PRO_0000312117" description="Sodium-coupled neutral amino acid transporter 5">
    <location>
        <begin position="1"/>
        <end position="479"/>
    </location>
</feature>
<feature type="topological domain" description="Cytoplasmic" evidence="2 15">
    <location>
        <begin position="1"/>
        <end position="58"/>
    </location>
</feature>
<feature type="transmembrane region" description="Helical" evidence="2">
    <location>
        <begin position="59"/>
        <end position="81"/>
    </location>
</feature>
<feature type="topological domain" description="Extracellular" evidence="2">
    <location>
        <begin position="82"/>
        <end position="97"/>
    </location>
</feature>
<feature type="transmembrane region" description="Helical" evidence="2">
    <location>
        <begin position="98"/>
        <end position="118"/>
    </location>
</feature>
<feature type="topological domain" description="Cytoplasmic" evidence="2">
    <location>
        <begin position="119"/>
        <end position="135"/>
    </location>
</feature>
<feature type="transmembrane region" description="Helical" evidence="2">
    <location>
        <begin position="136"/>
        <end position="156"/>
    </location>
</feature>
<feature type="topological domain" description="Extracellular" evidence="2">
    <location>
        <begin position="157"/>
        <end position="176"/>
    </location>
</feature>
<feature type="transmembrane region" description="Helical" evidence="2">
    <location>
        <begin position="177"/>
        <end position="197"/>
    </location>
</feature>
<feature type="topological domain" description="Cytoplasmic" evidence="2">
    <location>
        <begin position="198"/>
        <end position="202"/>
    </location>
</feature>
<feature type="transmembrane region" description="Helical" evidence="2">
    <location>
        <begin position="203"/>
        <end position="223"/>
    </location>
</feature>
<feature type="topological domain" description="Extracellular" evidence="2">
    <location>
        <begin position="224"/>
        <end position="264"/>
    </location>
</feature>
<feature type="transmembrane region" description="Helical" evidence="2">
    <location>
        <begin position="265"/>
        <end position="285"/>
    </location>
</feature>
<feature type="topological domain" description="Cytoplasmic" evidence="2">
    <location>
        <begin position="286"/>
        <end position="302"/>
    </location>
</feature>
<feature type="transmembrane region" description="Helical" evidence="2">
    <location>
        <begin position="303"/>
        <end position="323"/>
    </location>
</feature>
<feature type="topological domain" description="Extracellular" evidence="2">
    <location>
        <begin position="324"/>
        <end position="341"/>
    </location>
</feature>
<feature type="transmembrane region" description="Helical" evidence="2">
    <location>
        <begin position="342"/>
        <end position="362"/>
    </location>
</feature>
<feature type="topological domain" description="Cytoplasmic" evidence="2">
    <location>
        <begin position="363"/>
        <end position="383"/>
    </location>
</feature>
<feature type="transmembrane region" description="Helical" evidence="2">
    <location>
        <begin position="384"/>
        <end position="404"/>
    </location>
</feature>
<feature type="topological domain" description="Extracellular" evidence="2">
    <location>
        <begin position="405"/>
        <end position="406"/>
    </location>
</feature>
<feature type="transmembrane region" description="Helical" evidence="2">
    <location>
        <begin position="407"/>
        <end position="427"/>
    </location>
</feature>
<feature type="topological domain" description="Cytoplasmic" evidence="2">
    <location>
        <begin position="428"/>
        <end position="446"/>
    </location>
</feature>
<feature type="transmembrane region" description="Helical" evidence="2">
    <location>
        <begin position="447"/>
        <end position="467"/>
    </location>
</feature>
<feature type="topological domain" description="Extracellular" evidence="2">
    <location>
        <begin position="468"/>
        <end position="479"/>
    </location>
</feature>
<feature type="site" description="Involved in pH-sensing to the transport activity regulation" evidence="8">
    <location>
        <position position="471"/>
    </location>
</feature>
<feature type="glycosylation site" description="N-linked (GlcNAc...) asparagine" evidence="2">
    <location>
        <position position="236"/>
    </location>
</feature>
<feature type="disulfide bond" evidence="3">
    <location>
        <begin position="231"/>
        <end position="254"/>
    </location>
</feature>
<feature type="splice variant" id="VSP_029704" description="In isoform 2." evidence="11">
    <location>
        <begin position="1"/>
        <end position="8"/>
    </location>
</feature>
<feature type="mutagenesis site" description="Modifies the transporter pH-sensitivity." evidence="8">
    <original>H</original>
    <variation>A</variation>
    <location>
        <position position="479"/>
    </location>
</feature>
<feature type="sequence conflict" description="In Ref. 1; AAK69075." evidence="13" ref="1">
    <original>I</original>
    <variation>N</variation>
    <location>
        <position position="392"/>
    </location>
</feature>
<proteinExistence type="evidence at protein level"/>
<gene>
    <name evidence="18" type="primary">Slc38a5</name>
    <name evidence="11" type="synonym">Sn2</name>
    <name evidence="12" type="synonym">Snat5</name>
</gene>